<name>UXAC_CAUVC</name>
<keyword id="KW-0002">3D-structure</keyword>
<keyword id="KW-0413">Isomerase</keyword>
<keyword id="KW-1185">Reference proteome</keyword>
<protein>
    <recommendedName>
        <fullName evidence="1">Uronate isomerase</fullName>
        <ecNumber evidence="1">5.3.1.12</ecNumber>
    </recommendedName>
    <alternativeName>
        <fullName evidence="1">Glucuronate isomerase</fullName>
    </alternativeName>
    <alternativeName>
        <fullName evidence="1">Uronic isomerase</fullName>
    </alternativeName>
</protein>
<comment type="catalytic activity">
    <reaction evidence="1">
        <text>D-glucuronate = D-fructuronate</text>
        <dbReference type="Rhea" id="RHEA:13049"/>
        <dbReference type="ChEBI" id="CHEBI:58720"/>
        <dbReference type="ChEBI" id="CHEBI:59863"/>
        <dbReference type="EC" id="5.3.1.12"/>
    </reaction>
</comment>
<comment type="catalytic activity">
    <reaction evidence="1">
        <text>aldehydo-D-galacturonate = keto-D-tagaturonate</text>
        <dbReference type="Rhea" id="RHEA:27702"/>
        <dbReference type="ChEBI" id="CHEBI:12952"/>
        <dbReference type="ChEBI" id="CHEBI:17886"/>
        <dbReference type="EC" id="5.3.1.12"/>
    </reaction>
</comment>
<comment type="pathway">
    <text evidence="1">Carbohydrate metabolism; pentose and glucuronate interconversion.</text>
</comment>
<comment type="similarity">
    <text evidence="1">Belongs to the metallo-dependent hydrolases superfamily. Uronate isomerase family.</text>
</comment>
<evidence type="ECO:0000255" key="1">
    <source>
        <dbReference type="HAMAP-Rule" id="MF_00675"/>
    </source>
</evidence>
<evidence type="ECO:0007829" key="2">
    <source>
        <dbReference type="PDB" id="2Q01"/>
    </source>
</evidence>
<proteinExistence type="evidence at protein level"/>
<gene>
    <name evidence="1" type="primary">uxaC</name>
    <name type="ordered locus">CC_1490</name>
</gene>
<sequence>MARPLSFHEDRLFPSDPATRSYARGLYALVKDLPIISPHGHTDPSWFATNAPFQDATDLLLAPDHYLFRMLYSQGVSLDALKVRSKAGVPDTDPREAWRVFASHFYLFRGTPSWVWLNHVFSQVFGFTEFLEASNADDYFDRITAALATDAFRPRALFDRFNIETLATTEGPHESLQHHAAIRESGWGGHVITAYRPDAVIDFEDERSPRAFERFAETSGQDVYSWKSYLEAHRLRRQAFIDAGATSSDHGHPTAATADLSDVEAEALFNSLVKGDVTPEKAELFRAQMLTEMAKMSLDDGLVMQIHPGSHRNHNVGLLNSHGRDKGADIPMRTEYVDALKPLLTRLGNDPRLSIILFTLDETTYSRELAPLAGHYPVLKLGPSWWFHDSPEGMMRFREQVTETAGFYNTVGFNDDTRAFLSIPARHDVARRVDSAFLARMVAEHRMDLVEAEELIVDLTYNLPKKAYKLDQRPDWARPATLRAAAE</sequence>
<dbReference type="EC" id="5.3.1.12" evidence="1"/>
<dbReference type="EMBL" id="AE005673">
    <property type="protein sequence ID" value="AAK23469.1"/>
    <property type="molecule type" value="Genomic_DNA"/>
</dbReference>
<dbReference type="PIR" id="A87434">
    <property type="entry name" value="A87434"/>
</dbReference>
<dbReference type="RefSeq" id="NP_420301.1">
    <property type="nucleotide sequence ID" value="NC_002696.2"/>
</dbReference>
<dbReference type="RefSeq" id="WP_010919364.1">
    <property type="nucleotide sequence ID" value="NC_002696.2"/>
</dbReference>
<dbReference type="PDB" id="2Q01">
    <property type="method" value="X-ray"/>
    <property type="resolution" value="2.34 A"/>
    <property type="chains" value="A/B/C=2-487"/>
</dbReference>
<dbReference type="PDBsum" id="2Q01"/>
<dbReference type="SMR" id="Q9A874"/>
<dbReference type="STRING" id="190650.CC_1490"/>
<dbReference type="EnsemblBacteria" id="AAK23469">
    <property type="protein sequence ID" value="AAK23469"/>
    <property type="gene ID" value="CC_1490"/>
</dbReference>
<dbReference type="KEGG" id="ccr:CC_1490"/>
<dbReference type="PATRIC" id="fig|190650.5.peg.1517"/>
<dbReference type="eggNOG" id="COG1904">
    <property type="taxonomic scope" value="Bacteria"/>
</dbReference>
<dbReference type="HOGENOM" id="CLU_044465_0_0_5"/>
<dbReference type="BioCyc" id="CAULO:CC1490-MONOMER"/>
<dbReference type="UniPathway" id="UPA00246"/>
<dbReference type="EvolutionaryTrace" id="Q9A874"/>
<dbReference type="Proteomes" id="UP000001816">
    <property type="component" value="Chromosome"/>
</dbReference>
<dbReference type="GO" id="GO:0008880">
    <property type="term" value="F:glucuronate isomerase activity"/>
    <property type="evidence" value="ECO:0007669"/>
    <property type="project" value="UniProtKB-UniRule"/>
</dbReference>
<dbReference type="GO" id="GO:0019698">
    <property type="term" value="P:D-galacturonate catabolic process"/>
    <property type="evidence" value="ECO:0007669"/>
    <property type="project" value="TreeGrafter"/>
</dbReference>
<dbReference type="GO" id="GO:0042840">
    <property type="term" value="P:D-glucuronate catabolic process"/>
    <property type="evidence" value="ECO:0007669"/>
    <property type="project" value="TreeGrafter"/>
</dbReference>
<dbReference type="Gene3D" id="3.20.20.140">
    <property type="entry name" value="Metal-dependent hydrolases"/>
    <property type="match status" value="1"/>
</dbReference>
<dbReference type="Gene3D" id="1.10.2020.10">
    <property type="entry name" value="uronate isomerase, domain 2, chain A"/>
    <property type="match status" value="1"/>
</dbReference>
<dbReference type="HAMAP" id="MF_00675">
    <property type="entry name" value="UxaC"/>
    <property type="match status" value="1"/>
</dbReference>
<dbReference type="InterPro" id="IPR032466">
    <property type="entry name" value="Metal_Hydrolase"/>
</dbReference>
<dbReference type="InterPro" id="IPR003766">
    <property type="entry name" value="Uronate_isomerase"/>
</dbReference>
<dbReference type="NCBIfam" id="NF002794">
    <property type="entry name" value="PRK02925.1"/>
    <property type="match status" value="1"/>
</dbReference>
<dbReference type="PANTHER" id="PTHR30068">
    <property type="entry name" value="URONATE ISOMERASE"/>
    <property type="match status" value="1"/>
</dbReference>
<dbReference type="PANTHER" id="PTHR30068:SF4">
    <property type="entry name" value="URONATE ISOMERASE"/>
    <property type="match status" value="1"/>
</dbReference>
<dbReference type="Pfam" id="PF02614">
    <property type="entry name" value="UxaC"/>
    <property type="match status" value="1"/>
</dbReference>
<dbReference type="SUPFAM" id="SSF51556">
    <property type="entry name" value="Metallo-dependent hydrolases"/>
    <property type="match status" value="1"/>
</dbReference>
<feature type="chain" id="PRO_0000172766" description="Uronate isomerase">
    <location>
        <begin position="1"/>
        <end position="487"/>
    </location>
</feature>
<feature type="turn" evidence="2">
    <location>
        <begin position="9"/>
        <end position="12"/>
    </location>
</feature>
<feature type="helix" evidence="2">
    <location>
        <begin position="17"/>
        <end position="28"/>
    </location>
</feature>
<feature type="turn" evidence="2">
    <location>
        <begin position="29"/>
        <end position="32"/>
    </location>
</feature>
<feature type="strand" evidence="2">
    <location>
        <begin position="35"/>
        <end position="37"/>
    </location>
</feature>
<feature type="helix" evidence="2">
    <location>
        <begin position="45"/>
        <end position="49"/>
    </location>
</feature>
<feature type="helix" evidence="2">
    <location>
        <begin position="56"/>
        <end position="59"/>
    </location>
</feature>
<feature type="helix" evidence="2">
    <location>
        <begin position="65"/>
        <end position="72"/>
    </location>
</feature>
<feature type="turn" evidence="2">
    <location>
        <begin position="73"/>
        <end position="75"/>
    </location>
</feature>
<feature type="turn" evidence="2">
    <location>
        <begin position="79"/>
        <end position="82"/>
    </location>
</feature>
<feature type="helix" evidence="2">
    <location>
        <begin position="94"/>
        <end position="103"/>
    </location>
</feature>
<feature type="helix" evidence="2">
    <location>
        <begin position="105"/>
        <end position="108"/>
    </location>
</feature>
<feature type="helix" evidence="2">
    <location>
        <begin position="112"/>
        <end position="123"/>
    </location>
</feature>
<feature type="turn" evidence="2">
    <location>
        <begin position="133"/>
        <end position="135"/>
    </location>
</feature>
<feature type="helix" evidence="2">
    <location>
        <begin position="136"/>
        <end position="147"/>
    </location>
</feature>
<feature type="helix" evidence="2">
    <location>
        <begin position="150"/>
        <end position="152"/>
    </location>
</feature>
<feature type="helix" evidence="2">
    <location>
        <begin position="154"/>
        <end position="160"/>
    </location>
</feature>
<feature type="strand" evidence="2">
    <location>
        <begin position="163"/>
        <end position="167"/>
    </location>
</feature>
<feature type="helix" evidence="2">
    <location>
        <begin position="177"/>
        <end position="184"/>
    </location>
</feature>
<feature type="turn" evidence="2">
    <location>
        <begin position="199"/>
        <end position="201"/>
    </location>
</feature>
<feature type="helix" evidence="2">
    <location>
        <begin position="208"/>
        <end position="219"/>
    </location>
</feature>
<feature type="helix" evidence="2">
    <location>
        <begin position="226"/>
        <end position="242"/>
    </location>
</feature>
<feature type="strand" evidence="2">
    <location>
        <begin position="247"/>
        <end position="250"/>
    </location>
</feature>
<feature type="helix" evidence="2">
    <location>
        <begin position="262"/>
        <end position="274"/>
    </location>
</feature>
<feature type="helix" evidence="2">
    <location>
        <begin position="279"/>
        <end position="300"/>
    </location>
</feature>
<feature type="strand" evidence="2">
    <location>
        <begin position="303"/>
        <end position="306"/>
    </location>
</feature>
<feature type="helix" evidence="2">
    <location>
        <begin position="316"/>
        <end position="321"/>
    </location>
</feature>
<feature type="strand" evidence="2">
    <location>
        <begin position="324"/>
        <end position="327"/>
    </location>
</feature>
<feature type="turn" evidence="2">
    <location>
        <begin position="337"/>
        <end position="339"/>
    </location>
</feature>
<feature type="helix" evidence="2">
    <location>
        <begin position="341"/>
        <end position="347"/>
    </location>
</feature>
<feature type="strand" evidence="2">
    <location>
        <begin position="355"/>
        <end position="357"/>
    </location>
</feature>
<feature type="helix" evidence="2">
    <location>
        <begin position="364"/>
        <end position="367"/>
    </location>
</feature>
<feature type="helix" evidence="2">
    <location>
        <begin position="369"/>
        <end position="373"/>
    </location>
</feature>
<feature type="strand" evidence="2">
    <location>
        <begin position="379"/>
        <end position="381"/>
    </location>
</feature>
<feature type="helix" evidence="2">
    <location>
        <begin position="386"/>
        <end position="388"/>
    </location>
</feature>
<feature type="helix" evidence="2">
    <location>
        <begin position="391"/>
        <end position="405"/>
    </location>
</feature>
<feature type="helix" evidence="2">
    <location>
        <begin position="420"/>
        <end position="422"/>
    </location>
</feature>
<feature type="helix" evidence="2">
    <location>
        <begin position="423"/>
        <end position="443"/>
    </location>
</feature>
<feature type="helix" evidence="2">
    <location>
        <begin position="449"/>
        <end position="460"/>
    </location>
</feature>
<feature type="helix" evidence="2">
    <location>
        <begin position="462"/>
        <end position="467"/>
    </location>
</feature>
<accession>Q9A874</accession>
<organism>
    <name type="scientific">Caulobacter vibrioides (strain ATCC 19089 / CIP 103742 / CB 15)</name>
    <name type="common">Caulobacter crescentus</name>
    <dbReference type="NCBI Taxonomy" id="190650"/>
    <lineage>
        <taxon>Bacteria</taxon>
        <taxon>Pseudomonadati</taxon>
        <taxon>Pseudomonadota</taxon>
        <taxon>Alphaproteobacteria</taxon>
        <taxon>Caulobacterales</taxon>
        <taxon>Caulobacteraceae</taxon>
        <taxon>Caulobacter</taxon>
    </lineage>
</organism>
<reference key="1">
    <citation type="journal article" date="2001" name="Proc. Natl. Acad. Sci. U.S.A.">
        <title>Complete genome sequence of Caulobacter crescentus.</title>
        <authorList>
            <person name="Nierman W.C."/>
            <person name="Feldblyum T.V."/>
            <person name="Laub M.T."/>
            <person name="Paulsen I.T."/>
            <person name="Nelson K.E."/>
            <person name="Eisen J.A."/>
            <person name="Heidelberg J.F."/>
            <person name="Alley M.R.K."/>
            <person name="Ohta N."/>
            <person name="Maddock J.R."/>
            <person name="Potocka I."/>
            <person name="Nelson W.C."/>
            <person name="Newton A."/>
            <person name="Stephens C."/>
            <person name="Phadke N.D."/>
            <person name="Ely B."/>
            <person name="DeBoy R.T."/>
            <person name="Dodson R.J."/>
            <person name="Durkin A.S."/>
            <person name="Gwinn M.L."/>
            <person name="Haft D.H."/>
            <person name="Kolonay J.F."/>
            <person name="Smit J."/>
            <person name="Craven M.B."/>
            <person name="Khouri H.M."/>
            <person name="Shetty J."/>
            <person name="Berry K.J."/>
            <person name="Utterback T.R."/>
            <person name="Tran K."/>
            <person name="Wolf A.M."/>
            <person name="Vamathevan J.J."/>
            <person name="Ermolaeva M.D."/>
            <person name="White O."/>
            <person name="Salzberg S.L."/>
            <person name="Venter J.C."/>
            <person name="Shapiro L."/>
            <person name="Fraser C.M."/>
        </authorList>
    </citation>
    <scope>NUCLEOTIDE SEQUENCE [LARGE SCALE GENOMIC DNA]</scope>
    <source>
        <strain>ATCC 19089 / CIP 103742 / CB 15</strain>
    </source>
</reference>